<gene>
    <name type="primary">Mapk8ip3</name>
    <name type="synonym">Jip3</name>
</gene>
<evidence type="ECO:0000250" key="1">
    <source>
        <dbReference type="UniProtKB" id="Q9ESN9"/>
    </source>
</evidence>
<evidence type="ECO:0000250" key="2">
    <source>
        <dbReference type="UniProtKB" id="Q9UPT6"/>
    </source>
</evidence>
<evidence type="ECO:0000255" key="3"/>
<evidence type="ECO:0000255" key="4">
    <source>
        <dbReference type="PROSITE-ProRule" id="PRU01112"/>
    </source>
</evidence>
<evidence type="ECO:0000255" key="5">
    <source>
        <dbReference type="PROSITE-ProRule" id="PRU01113"/>
    </source>
</evidence>
<evidence type="ECO:0000256" key="6">
    <source>
        <dbReference type="SAM" id="MobiDB-lite"/>
    </source>
</evidence>
<evidence type="ECO:0000269" key="7">
    <source>
    </source>
</evidence>
<evidence type="ECO:0000269" key="8">
    <source>
    </source>
</evidence>
<evidence type="ECO:0000269" key="9">
    <source>
    </source>
</evidence>
<evidence type="ECO:0000269" key="10">
    <source>
    </source>
</evidence>
<evidence type="ECO:0000269" key="11">
    <source>
    </source>
</evidence>
<evidence type="ECO:0000305" key="12"/>
<dbReference type="EMBL" id="DQ377222">
    <property type="protein sequence ID" value="ABD24061.1"/>
    <property type="molecule type" value="mRNA"/>
</dbReference>
<dbReference type="EMBL" id="AC130925">
    <property type="status" value="NOT_ANNOTATED_CDS"/>
    <property type="molecule type" value="Genomic_DNA"/>
</dbReference>
<dbReference type="RefSeq" id="NP_001094143.2">
    <property type="nucleotide sequence ID" value="NM_001100673.2"/>
</dbReference>
<dbReference type="SMR" id="E9PSK7"/>
<dbReference type="FunCoup" id="E9PSK7">
    <property type="interactions" value="3915"/>
</dbReference>
<dbReference type="STRING" id="10116.ENSRNOP00000039682"/>
<dbReference type="GlyGen" id="E9PSK7">
    <property type="glycosylation" value="3 sites"/>
</dbReference>
<dbReference type="iPTMnet" id="E9PSK7"/>
<dbReference type="PhosphoSitePlus" id="E9PSK7"/>
<dbReference type="PaxDb" id="10116-ENSRNOP00000039682"/>
<dbReference type="PeptideAtlas" id="E9PSK7"/>
<dbReference type="GeneID" id="302983"/>
<dbReference type="KEGG" id="rno:302983"/>
<dbReference type="AGR" id="RGD:1563691"/>
<dbReference type="CTD" id="23162"/>
<dbReference type="RGD" id="1563691">
    <property type="gene designation" value="Mapk8ip3"/>
</dbReference>
<dbReference type="VEuPathDB" id="HostDB:ENSRNOG00000033568"/>
<dbReference type="eggNOG" id="KOG2077">
    <property type="taxonomic scope" value="Eukaryota"/>
</dbReference>
<dbReference type="HOGENOM" id="CLU_003841_0_0_1"/>
<dbReference type="InParanoid" id="E9PSK7"/>
<dbReference type="PRO" id="PR:E9PSK7"/>
<dbReference type="Proteomes" id="UP000002494">
    <property type="component" value="Chromosome 10"/>
</dbReference>
<dbReference type="Bgee" id="ENSRNOG00000033568">
    <property type="expression patterns" value="Expressed in frontal cortex and 20 other cell types or tissues"/>
</dbReference>
<dbReference type="GO" id="GO:0030673">
    <property type="term" value="C:axolemma"/>
    <property type="evidence" value="ECO:0000266"/>
    <property type="project" value="RGD"/>
</dbReference>
<dbReference type="GO" id="GO:0030424">
    <property type="term" value="C:axon"/>
    <property type="evidence" value="ECO:0000314"/>
    <property type="project" value="UniProtKB"/>
</dbReference>
<dbReference type="GO" id="GO:1904115">
    <property type="term" value="C:axon cytoplasm"/>
    <property type="evidence" value="ECO:0007669"/>
    <property type="project" value="GOC"/>
</dbReference>
<dbReference type="GO" id="GO:0044297">
    <property type="term" value="C:cell body"/>
    <property type="evidence" value="ECO:0000314"/>
    <property type="project" value="UniProtKB"/>
</dbReference>
<dbReference type="GO" id="GO:0005737">
    <property type="term" value="C:cytoplasm"/>
    <property type="evidence" value="ECO:0000266"/>
    <property type="project" value="RGD"/>
</dbReference>
<dbReference type="GO" id="GO:0031410">
    <property type="term" value="C:cytoplasmic vesicle"/>
    <property type="evidence" value="ECO:0007669"/>
    <property type="project" value="UniProtKB-KW"/>
</dbReference>
<dbReference type="GO" id="GO:0030425">
    <property type="term" value="C:dendrite"/>
    <property type="evidence" value="ECO:0000314"/>
    <property type="project" value="UniProtKB"/>
</dbReference>
<dbReference type="GO" id="GO:0000139">
    <property type="term" value="C:Golgi membrane"/>
    <property type="evidence" value="ECO:0000266"/>
    <property type="project" value="RGD"/>
</dbReference>
<dbReference type="GO" id="GO:0030426">
    <property type="term" value="C:growth cone"/>
    <property type="evidence" value="ECO:0007669"/>
    <property type="project" value="UniProtKB-SubCell"/>
</dbReference>
<dbReference type="GO" id="GO:0048471">
    <property type="term" value="C:perinuclear region of cytoplasm"/>
    <property type="evidence" value="ECO:0000314"/>
    <property type="project" value="UniProtKB"/>
</dbReference>
<dbReference type="GO" id="GO:0005886">
    <property type="term" value="C:plasma membrane"/>
    <property type="evidence" value="ECO:0000266"/>
    <property type="project" value="RGD"/>
</dbReference>
<dbReference type="GO" id="GO:0005790">
    <property type="term" value="C:smooth endoplasmic reticulum"/>
    <property type="evidence" value="ECO:0000266"/>
    <property type="project" value="RGD"/>
</dbReference>
<dbReference type="GO" id="GO:0008432">
    <property type="term" value="F:JUN kinase binding"/>
    <property type="evidence" value="ECO:0000266"/>
    <property type="project" value="RGD"/>
</dbReference>
<dbReference type="GO" id="GO:0019894">
    <property type="term" value="F:kinesin binding"/>
    <property type="evidence" value="ECO:0000250"/>
    <property type="project" value="UniProtKB"/>
</dbReference>
<dbReference type="GO" id="GO:0005078">
    <property type="term" value="F:MAP-kinase scaffold activity"/>
    <property type="evidence" value="ECO:0000266"/>
    <property type="project" value="RGD"/>
</dbReference>
<dbReference type="GO" id="GO:0031434">
    <property type="term" value="F:mitogen-activated protein kinase kinase binding"/>
    <property type="evidence" value="ECO:0000353"/>
    <property type="project" value="RGD"/>
</dbReference>
<dbReference type="GO" id="GO:0031435">
    <property type="term" value="F:mitogen-activated protein kinase kinase kinase binding"/>
    <property type="evidence" value="ECO:0000266"/>
    <property type="project" value="RGD"/>
</dbReference>
<dbReference type="GO" id="GO:0030159">
    <property type="term" value="F:signaling receptor complex adaptor activity"/>
    <property type="evidence" value="ECO:0000318"/>
    <property type="project" value="GO_Central"/>
</dbReference>
<dbReference type="GO" id="GO:0099641">
    <property type="term" value="P:anterograde axonal protein transport"/>
    <property type="evidence" value="ECO:0000315"/>
    <property type="project" value="UniProtKB"/>
</dbReference>
<dbReference type="GO" id="GO:0061564">
    <property type="term" value="P:axon development"/>
    <property type="evidence" value="ECO:0000315"/>
    <property type="project" value="UniProtKB"/>
</dbReference>
<dbReference type="GO" id="GO:0007411">
    <property type="term" value="P:axon guidance"/>
    <property type="evidence" value="ECO:0000266"/>
    <property type="project" value="RGD"/>
</dbReference>
<dbReference type="GO" id="GO:0031103">
    <property type="term" value="P:axon regeneration"/>
    <property type="evidence" value="ECO:0000315"/>
    <property type="project" value="UniProtKB"/>
</dbReference>
<dbReference type="GO" id="GO:0030900">
    <property type="term" value="P:forebrain development"/>
    <property type="evidence" value="ECO:0000266"/>
    <property type="project" value="RGD"/>
</dbReference>
<dbReference type="GO" id="GO:0001701">
    <property type="term" value="P:in utero embryonic development"/>
    <property type="evidence" value="ECO:0000266"/>
    <property type="project" value="RGD"/>
</dbReference>
<dbReference type="GO" id="GO:0007254">
    <property type="term" value="P:JNK cascade"/>
    <property type="evidence" value="ECO:0000266"/>
    <property type="project" value="RGD"/>
</dbReference>
<dbReference type="GO" id="GO:0048286">
    <property type="term" value="P:lung alveolus development"/>
    <property type="evidence" value="ECO:0000266"/>
    <property type="project" value="RGD"/>
</dbReference>
<dbReference type="GO" id="GO:0060425">
    <property type="term" value="P:lung morphogenesis"/>
    <property type="evidence" value="ECO:0000266"/>
    <property type="project" value="RGD"/>
</dbReference>
<dbReference type="GO" id="GO:0043066">
    <property type="term" value="P:negative regulation of apoptotic process"/>
    <property type="evidence" value="ECO:0000266"/>
    <property type="project" value="RGD"/>
</dbReference>
<dbReference type="GO" id="GO:0031175">
    <property type="term" value="P:neuron projection development"/>
    <property type="evidence" value="ECO:0000270"/>
    <property type="project" value="RGD"/>
</dbReference>
<dbReference type="GO" id="GO:0046330">
    <property type="term" value="P:positive regulation of JNK cascade"/>
    <property type="evidence" value="ECO:0000315"/>
    <property type="project" value="UniProtKB"/>
</dbReference>
<dbReference type="GO" id="GO:0045666">
    <property type="term" value="P:positive regulation of neuron differentiation"/>
    <property type="evidence" value="ECO:0000315"/>
    <property type="project" value="RGD"/>
</dbReference>
<dbReference type="GO" id="GO:2001224">
    <property type="term" value="P:positive regulation of neuron migration"/>
    <property type="evidence" value="ECO:0000266"/>
    <property type="project" value="RGD"/>
</dbReference>
<dbReference type="GO" id="GO:0009791">
    <property type="term" value="P:post-embryonic development"/>
    <property type="evidence" value="ECO:0000266"/>
    <property type="project" value="RGD"/>
</dbReference>
<dbReference type="GO" id="GO:0008104">
    <property type="term" value="P:protein localization"/>
    <property type="evidence" value="ECO:0000266"/>
    <property type="project" value="RGD"/>
</dbReference>
<dbReference type="GO" id="GO:0050821">
    <property type="term" value="P:protein stabilization"/>
    <property type="evidence" value="ECO:0000266"/>
    <property type="project" value="RGD"/>
</dbReference>
<dbReference type="GO" id="GO:0010468">
    <property type="term" value="P:regulation of gene expression"/>
    <property type="evidence" value="ECO:0000266"/>
    <property type="project" value="RGD"/>
</dbReference>
<dbReference type="GO" id="GO:0046328">
    <property type="term" value="P:regulation of JNK cascade"/>
    <property type="evidence" value="ECO:0000266"/>
    <property type="project" value="RGD"/>
</dbReference>
<dbReference type="GO" id="GO:0007585">
    <property type="term" value="P:respiratory gaseous exchange by respiratory system"/>
    <property type="evidence" value="ECO:0000266"/>
    <property type="project" value="RGD"/>
</dbReference>
<dbReference type="GO" id="GO:0016192">
    <property type="term" value="P:vesicle-mediated transport"/>
    <property type="evidence" value="ECO:0000266"/>
    <property type="project" value="RGD"/>
</dbReference>
<dbReference type="FunFam" id="1.20.58.1770:FF:000001">
    <property type="entry name" value="C-Jun-amino-terminal kinase-interacting protein 3 isoform X1"/>
    <property type="match status" value="1"/>
</dbReference>
<dbReference type="FunFam" id="1.20.5.1000:FF:000001">
    <property type="entry name" value="C-Jun-amino-terminal kinase-interacting protein 3 isoform X2"/>
    <property type="match status" value="1"/>
</dbReference>
<dbReference type="FunFam" id="2.130.10.10:FF:000334">
    <property type="entry name" value="C-Jun-amino-terminal kinase-interacting protein 3 isoform X6"/>
    <property type="match status" value="1"/>
</dbReference>
<dbReference type="Gene3D" id="1.20.58.1770">
    <property type="match status" value="1"/>
</dbReference>
<dbReference type="Gene3D" id="1.20.5.1000">
    <property type="entry name" value="arf6 gtpase in complex with a specific effector, jip4"/>
    <property type="match status" value="1"/>
</dbReference>
<dbReference type="Gene3D" id="2.130.10.10">
    <property type="entry name" value="YVTN repeat-like/Quinoprotein amine dehydrogenase"/>
    <property type="match status" value="1"/>
</dbReference>
<dbReference type="InterPro" id="IPR039911">
    <property type="entry name" value="JIP3/JIP4"/>
</dbReference>
<dbReference type="InterPro" id="IPR032486">
    <property type="entry name" value="JIP_LZII"/>
</dbReference>
<dbReference type="InterPro" id="IPR034743">
    <property type="entry name" value="RH1"/>
</dbReference>
<dbReference type="InterPro" id="IPR034744">
    <property type="entry name" value="RH2"/>
</dbReference>
<dbReference type="InterPro" id="IPR015943">
    <property type="entry name" value="WD40/YVTN_repeat-like_dom_sf"/>
</dbReference>
<dbReference type="InterPro" id="IPR036322">
    <property type="entry name" value="WD40_repeat_dom_sf"/>
</dbReference>
<dbReference type="PANTHER" id="PTHR13886:SF3">
    <property type="entry name" value="C-JUN-AMINO-TERMINAL KINASE-INTERACTING PROTEIN 3"/>
    <property type="match status" value="1"/>
</dbReference>
<dbReference type="PANTHER" id="PTHR13886">
    <property type="entry name" value="JNK/SAPK-ASSOCIATED PROTEIN"/>
    <property type="match status" value="1"/>
</dbReference>
<dbReference type="Pfam" id="PF16471">
    <property type="entry name" value="JIP_LZII"/>
    <property type="match status" value="1"/>
</dbReference>
<dbReference type="Pfam" id="PF09744">
    <property type="entry name" value="RH1"/>
    <property type="match status" value="1"/>
</dbReference>
<dbReference type="Pfam" id="PF19056">
    <property type="entry name" value="WD40_2"/>
    <property type="match status" value="1"/>
</dbReference>
<dbReference type="SUPFAM" id="SSF50978">
    <property type="entry name" value="WD40 repeat-like"/>
    <property type="match status" value="1"/>
</dbReference>
<dbReference type="PROSITE" id="PS51776">
    <property type="entry name" value="RH1"/>
    <property type="match status" value="1"/>
</dbReference>
<dbReference type="PROSITE" id="PS51777">
    <property type="entry name" value="RH2"/>
    <property type="match status" value="1"/>
</dbReference>
<protein>
    <recommendedName>
        <fullName>C-Jun-amino-terminal kinase-interacting protein 3</fullName>
        <shortName>JIP-3</shortName>
        <shortName>JNK-interacting protein 3</shortName>
    </recommendedName>
    <alternativeName>
        <fullName>JNK MAP kinase scaffold protein 3</fullName>
    </alternativeName>
</protein>
<accession>E9PSK7</accession>
<accession>B0VXR4</accession>
<sequence>MMEIQMDEGGGVVVYQDDYCSGSVMSERVSGLAGSIYREFERLIHCYDEEVVKELMPLVVNVLENLDSVLSENQEHEVELELLREDNEQLLTQYEREKALRKQAEEKFIEFEDALEQEKKELQIQVEHYEFQTRQLELKAKNYADQISRLEERESEMKKEYNALHQRHTEMIQTYVEHIERSKMQQVGGGGQTESSLPGRSRKERPTSLNVFPLADGMVRAQMGGKLVPAGDHWHLSDLGQLQSSSSYQCPNDEMSESGQSSAAATPSTTGTKSNTPTSSVPSAAVTPLNESLQPLGDYGSVTKNNKRAREKRNSRNMEVQVTQEMRNVSIGMGSSDEWSDVQDIIDSTPELDVCPETRLDRTGSSPTQGIVNKAFGINTDSLYHELSTAGSEVIGDVDEGADLLGEFSGMGKEVGNLLLENSQLLETKNALNVVKNDLIAKVDQLSGEQEVLKGELEAAKQAKVKLENRIKELEEELKRVKSEAVTARREPREEVEDDKIPMAQRRRFTRVEMARVLMERNQYKERLMELQEAVRWTEMIRASREHPSVQEKKKSTIWQFFSRLFSSSSSPPPAKRSYPSVNIHYKSPTTAGFSQRRNHALCQISAGSRPLEFFPDDDCTSSARREQKREQYRQVREHVRNDDGRLQACGWSLPAKYKQLSPNGGQEDTRMKNVPVPVYCRPLVEKDPSTKLWCAAGVNLSGWKPNEEDSSNGPKPAPGRDPLTCDREGEGEPKSTHPSPEKKKAKEVPEADATSSRVWILTSTLTTSKVVIIDANQPGTVVDQFTVCNAHVLCISSIPAASDSDYPPGDMFLDSDVNPEDSGADGVLAGITLVGCATRCNVPRSNCSSRGDTPVLDKGQGDVAATANGKVNPSQSTEEATEATEVPDPGPSESEATTVRPGPLTEHVFTDPAPTQSSSTQPASENGSESDGSIVQPQVEPSGESSATTSSAAPTMWLGAQNGWLYVHSAVANWKKCLHSIKLKDSVLSLVHVKGRVLVALADGTLAIFHRGEDGQWDLSNYHLMDLGHPHHSIRCMAVVDDRVWCGYKNKVHVIQPKTMQIEKSFDAHPRRESQVRQLAWIGDGVWVSIRLDSTLRLYHAHTHQHLQDVDIEPYVSKMLGTGKLGFSFVRITALLIAGNRLWVGTGNGVVISIPLTETVVLHRGQLLGLRANKTSPTSGEGTRPGGIIHVYGDDSSDKTASSFIPYCSMAQAQLCFHGHRDAVKFFVSVPGNVLATLNGSVLDSPSEGPGPAAPAADAEGQKLKNALVLSGGEGYIDFRIGDGEDDETEEGTGDVNQTKPSLSKAERSHIIVWQVSYTPE</sequence>
<reference key="1">
    <citation type="journal article" date="2010" name="Can. J. Physiol. Pharmacol.">
        <title>Regulation of stress-associated scaffold proteins JIP1 and JIP3 on the c-Jun NH2-terminal kinase in ischemia-reperfusion.</title>
        <authorList>
            <person name="Xu B."/>
            <person name="Zhou Y."/>
            <person name="Karmin O."/>
            <person name="Choy P.C."/>
            <person name="Pierce G.N."/>
            <person name="Siow Y.L."/>
        </authorList>
    </citation>
    <scope>NUCLEOTIDE SEQUENCE [MRNA]</scope>
    <scope>FUNCTION</scope>
    <scope>INTERACTION WITH MAPK10</scope>
    <source>
        <strain>Sprague-Dawley</strain>
        <tissue>Heart</tissue>
    </source>
</reference>
<reference key="2">
    <citation type="journal article" date="2004" name="Nature">
        <title>Genome sequence of the Brown Norway rat yields insights into mammalian evolution.</title>
        <authorList>
            <person name="Gibbs R.A."/>
            <person name="Weinstock G.M."/>
            <person name="Metzker M.L."/>
            <person name="Muzny D.M."/>
            <person name="Sodergren E.J."/>
            <person name="Scherer S."/>
            <person name="Scott G."/>
            <person name="Steffen D."/>
            <person name="Worley K.C."/>
            <person name="Burch P.E."/>
            <person name="Okwuonu G."/>
            <person name="Hines S."/>
            <person name="Lewis L."/>
            <person name="Deramo C."/>
            <person name="Delgado O."/>
            <person name="Dugan-Rocha S."/>
            <person name="Miner G."/>
            <person name="Morgan M."/>
            <person name="Hawes A."/>
            <person name="Gill R."/>
            <person name="Holt R.A."/>
            <person name="Adams M.D."/>
            <person name="Amanatides P.G."/>
            <person name="Baden-Tillson H."/>
            <person name="Barnstead M."/>
            <person name="Chin S."/>
            <person name="Evans C.A."/>
            <person name="Ferriera S."/>
            <person name="Fosler C."/>
            <person name="Glodek A."/>
            <person name="Gu Z."/>
            <person name="Jennings D."/>
            <person name="Kraft C.L."/>
            <person name="Nguyen T."/>
            <person name="Pfannkoch C.M."/>
            <person name="Sitter C."/>
            <person name="Sutton G.G."/>
            <person name="Venter J.C."/>
            <person name="Woodage T."/>
            <person name="Smith D."/>
            <person name="Lee H.-M."/>
            <person name="Gustafson E."/>
            <person name="Cahill P."/>
            <person name="Kana A."/>
            <person name="Doucette-Stamm L."/>
            <person name="Weinstock K."/>
            <person name="Fechtel K."/>
            <person name="Weiss R.B."/>
            <person name="Dunn D.M."/>
            <person name="Green E.D."/>
            <person name="Blakesley R.W."/>
            <person name="Bouffard G.G."/>
            <person name="De Jong P.J."/>
            <person name="Osoegawa K."/>
            <person name="Zhu B."/>
            <person name="Marra M."/>
            <person name="Schein J."/>
            <person name="Bosdet I."/>
            <person name="Fjell C."/>
            <person name="Jones S."/>
            <person name="Krzywinski M."/>
            <person name="Mathewson C."/>
            <person name="Siddiqui A."/>
            <person name="Wye N."/>
            <person name="McPherson J."/>
            <person name="Zhao S."/>
            <person name="Fraser C.M."/>
            <person name="Shetty J."/>
            <person name="Shatsman S."/>
            <person name="Geer K."/>
            <person name="Chen Y."/>
            <person name="Abramzon S."/>
            <person name="Nierman W.C."/>
            <person name="Havlak P.H."/>
            <person name="Chen R."/>
            <person name="Durbin K.J."/>
            <person name="Egan A."/>
            <person name="Ren Y."/>
            <person name="Song X.-Z."/>
            <person name="Li B."/>
            <person name="Liu Y."/>
            <person name="Qin X."/>
            <person name="Cawley S."/>
            <person name="Cooney A.J."/>
            <person name="D'Souza L.M."/>
            <person name="Martin K."/>
            <person name="Wu J.Q."/>
            <person name="Gonzalez-Garay M.L."/>
            <person name="Jackson A.R."/>
            <person name="Kalafus K.J."/>
            <person name="McLeod M.P."/>
            <person name="Milosavljevic A."/>
            <person name="Virk D."/>
            <person name="Volkov A."/>
            <person name="Wheeler D.A."/>
            <person name="Zhang Z."/>
            <person name="Bailey J.A."/>
            <person name="Eichler E.E."/>
            <person name="Tuzun E."/>
            <person name="Birney E."/>
            <person name="Mongin E."/>
            <person name="Ureta-Vidal A."/>
            <person name="Woodwark C."/>
            <person name="Zdobnov E."/>
            <person name="Bork P."/>
            <person name="Suyama M."/>
            <person name="Torrents D."/>
            <person name="Alexandersson M."/>
            <person name="Trask B.J."/>
            <person name="Young J.M."/>
            <person name="Huang H."/>
            <person name="Wang H."/>
            <person name="Xing H."/>
            <person name="Daniels S."/>
            <person name="Gietzen D."/>
            <person name="Schmidt J."/>
            <person name="Stevens K."/>
            <person name="Vitt U."/>
            <person name="Wingrove J."/>
            <person name="Camara F."/>
            <person name="Mar Alba M."/>
            <person name="Abril J.F."/>
            <person name="Guigo R."/>
            <person name="Smit A."/>
            <person name="Dubchak I."/>
            <person name="Rubin E.M."/>
            <person name="Couronne O."/>
            <person name="Poliakov A."/>
            <person name="Huebner N."/>
            <person name="Ganten D."/>
            <person name="Goesele C."/>
            <person name="Hummel O."/>
            <person name="Kreitler T."/>
            <person name="Lee Y.-A."/>
            <person name="Monti J."/>
            <person name="Schulz H."/>
            <person name="Zimdahl H."/>
            <person name="Himmelbauer H."/>
            <person name="Lehrach H."/>
            <person name="Jacob H.J."/>
            <person name="Bromberg S."/>
            <person name="Gullings-Handley J."/>
            <person name="Jensen-Seaman M.I."/>
            <person name="Kwitek A.E."/>
            <person name="Lazar J."/>
            <person name="Pasko D."/>
            <person name="Tonellato P.J."/>
            <person name="Twigger S."/>
            <person name="Ponting C.P."/>
            <person name="Duarte J.M."/>
            <person name="Rice S."/>
            <person name="Goodstadt L."/>
            <person name="Beatson S.A."/>
            <person name="Emes R.D."/>
            <person name="Winter E.E."/>
            <person name="Webber C."/>
            <person name="Brandt P."/>
            <person name="Nyakatura G."/>
            <person name="Adetobi M."/>
            <person name="Chiaromonte F."/>
            <person name="Elnitski L."/>
            <person name="Eswara P."/>
            <person name="Hardison R.C."/>
            <person name="Hou M."/>
            <person name="Kolbe D."/>
            <person name="Makova K."/>
            <person name="Miller W."/>
            <person name="Nekrutenko A."/>
            <person name="Riemer C."/>
            <person name="Schwartz S."/>
            <person name="Taylor J."/>
            <person name="Yang S."/>
            <person name="Zhang Y."/>
            <person name="Lindpaintner K."/>
            <person name="Andrews T.D."/>
            <person name="Caccamo M."/>
            <person name="Clamp M."/>
            <person name="Clarke L."/>
            <person name="Curwen V."/>
            <person name="Durbin R.M."/>
            <person name="Eyras E."/>
            <person name="Searle S.M."/>
            <person name="Cooper G.M."/>
            <person name="Batzoglou S."/>
            <person name="Brudno M."/>
            <person name="Sidow A."/>
            <person name="Stone E.A."/>
            <person name="Payseur B.A."/>
            <person name="Bourque G."/>
            <person name="Lopez-Otin C."/>
            <person name="Puente X.S."/>
            <person name="Chakrabarti K."/>
            <person name="Chatterji S."/>
            <person name="Dewey C."/>
            <person name="Pachter L."/>
            <person name="Bray N."/>
            <person name="Yap V.B."/>
            <person name="Caspi A."/>
            <person name="Tesler G."/>
            <person name="Pevzner P.A."/>
            <person name="Haussler D."/>
            <person name="Roskin K.M."/>
            <person name="Baertsch R."/>
            <person name="Clawson H."/>
            <person name="Furey T.S."/>
            <person name="Hinrichs A.S."/>
            <person name="Karolchik D."/>
            <person name="Kent W.J."/>
            <person name="Rosenbloom K.R."/>
            <person name="Trumbower H."/>
            <person name="Weirauch M."/>
            <person name="Cooper D.N."/>
            <person name="Stenson P.D."/>
            <person name="Ma B."/>
            <person name="Brent M."/>
            <person name="Arumugam M."/>
            <person name="Shteynberg D."/>
            <person name="Copley R.R."/>
            <person name="Taylor M.S."/>
            <person name="Riethman H."/>
            <person name="Mudunuri U."/>
            <person name="Peterson J."/>
            <person name="Guyer M."/>
            <person name="Felsenfeld A."/>
            <person name="Old S."/>
            <person name="Mockrin S."/>
            <person name="Collins F.S."/>
        </authorList>
    </citation>
    <scope>NUCLEOTIDE SEQUENCE [LARGE SCALE GENOMIC DNA]</scope>
    <source>
        <strain>Brown Norway</strain>
    </source>
</reference>
<reference key="3">
    <citation type="journal article" date="2011" name="J. Neurosci.">
        <title>JIP3 mediates TrkB axonal anterograde transport and enhances BDNF signaling by directly bridging TrkB with kinesin-1.</title>
        <authorList>
            <person name="Huang S.H."/>
            <person name="Duan S."/>
            <person name="Sun T."/>
            <person name="Wang J."/>
            <person name="Zhao L."/>
            <person name="Geng Z."/>
            <person name="Yan J."/>
            <person name="Sun H.J."/>
            <person name="Chen Z.Y."/>
        </authorList>
    </citation>
    <scope>FUNCTION</scope>
    <scope>SUBCELLULAR LOCATION</scope>
    <scope>INTERACTION WITH NTRK2 AND KLC1</scope>
</reference>
<reference key="4">
    <citation type="journal article" date="2012" name="J. Biol. Chem.">
        <title>Sh3rf2/POSHER protein promotes cell survival by RING-mediated proteasomal degradation of the c-Jun N-terminal kinase scaffold POSH (Plenty of SH3s) protein.</title>
        <authorList>
            <person name="Wilhelm M."/>
            <person name="Kukekov N.V."/>
            <person name="Schmit T.L."/>
            <person name="Biagas K.V."/>
            <person name="Sproul A.A."/>
            <person name="Gire S."/>
            <person name="Maes M.E."/>
            <person name="Xu Z."/>
            <person name="Greene L.A."/>
        </authorList>
    </citation>
    <scope>INTERACTION WITH SH3RF2</scope>
</reference>
<reference key="5">
    <citation type="journal article" date="2012" name="Nat. Commun.">
        <title>Quantitative maps of protein phosphorylation sites across 14 different rat organs and tissues.</title>
        <authorList>
            <person name="Lundby A."/>
            <person name="Secher A."/>
            <person name="Lage K."/>
            <person name="Nordsborg N.B."/>
            <person name="Dmytriyev A."/>
            <person name="Lundby C."/>
            <person name="Olsen J.V."/>
        </authorList>
    </citation>
    <scope>IDENTIFICATION BY MASS SPECTROMETRY [LARGE SCALE ANALYSIS]</scope>
</reference>
<reference key="6">
    <citation type="journal article" date="2013" name="J. Biol. Chem.">
        <title>c-Jun NH2-terminal kinase (JNK)-interacting protein-3 (JIP3) regulates neuronal axon elongation in a kinesin- and JNK-dependent manner.</title>
        <authorList>
            <person name="Sun T."/>
            <person name="Yu N."/>
            <person name="Zhai L.K."/>
            <person name="Li N."/>
            <person name="Zhang C."/>
            <person name="Zhou L."/>
            <person name="Huang Z."/>
            <person name="Jiang X.Y."/>
            <person name="Shen Y."/>
            <person name="Chen Z.Y."/>
        </authorList>
    </citation>
    <scope>FUNCTION</scope>
    <scope>SUBCELLULAR LOCATION</scope>
</reference>
<reference key="7">
    <citation type="journal article" date="2015" name="J. Biol. Chem.">
        <title>JIP3 activates kinesin-1 motility to promote axon elongation.</title>
        <authorList>
            <person name="Watt D."/>
            <person name="Dixit R."/>
            <person name="Cavalli V."/>
        </authorList>
    </citation>
    <scope>FUNCTION</scope>
</reference>
<comment type="function">
    <text evidence="1 7 8 10 11">The JNK-interacting protein (JIP) group of scaffold proteins selectively mediates JNK signaling by aggregating specific components of the MAPK cascade to form a functional JNK signaling module. May function as a regulator of vesicle transport, through interactions with the JNK-signaling components and motor proteins (By similarity). Promotes neuronal axon elongation in a kinesin- and JNK-dependent manner. Activates cofilin at axon tips via local activation of JNK, thereby regulating filopodial dynamics and enhancing axon elongation. Its binding to kinesin heavy chains (KHC), promotes kinesin-1 motility along microtubules and is essential for axon elongation and regeneration. Regulates cortical neuronal migration by mediating NTRK2/TRKB anterograde axonal transport during brain development. Acts as an adapter that bridges the interaction between NTRK2/TRKB and KLC1 and drives NTRK2/TRKB axonal but not dendritic anterograde transport, which is essential for subsequent BDNF-triggered signaling and filopodia formation.</text>
</comment>
<comment type="subunit">
    <text evidence="1 2 7 8 9">Forms homo- or heterooligomeric complexes. The central region of MAPK8IP3 interacts with the C-terminal of MAPK8IP2 but not MAPK8IP1. Binds specific components of the JNK signaling pathway namely MAPK8/JNK1, MAPK9/JNK2 and MAPK10/JNK3 to the N-terminal region, MAP2K4/MKK4 and MAP2K7/MKK7 to the central region and MAP3K11 to the C-terminal region. Binds the TPR motif-containing C-terminal of kinesin light chain, KLC1. Pre-assembled MAPK8IP1 scaffolding complexes are then transported as a cargo of kinesin, to the required subcellular location. Interacts with ROCK1 and this interaction is enhanced by ultraviolet-B (UVB) radiation (By similarity). Interacts with SH3RF2 (PubMed:22128169). Interacts with NTRK3/TRKC (By similarity). Interacts with NTRK2/TRKB (PubMed:21775604).</text>
</comment>
<comment type="subcellular location">
    <subcellularLocation>
        <location evidence="1">Cytoplasm</location>
    </subcellularLocation>
    <subcellularLocation>
        <location evidence="1">Golgi apparatus</location>
    </subcellularLocation>
    <subcellularLocation>
        <location evidence="1">Cytoplasmic vesicle</location>
    </subcellularLocation>
    <subcellularLocation>
        <location evidence="1">Cell projection</location>
        <location evidence="1">Growth cone</location>
    </subcellularLocation>
    <subcellularLocation>
        <location evidence="8 10">Cell projection</location>
        <location evidence="8 10">Axon</location>
    </subcellularLocation>
    <subcellularLocation>
        <location evidence="8">Cell projection</location>
        <location evidence="8">Dendrite</location>
    </subcellularLocation>
    <subcellularLocation>
        <location evidence="8">Cytoplasm</location>
        <location evidence="8">Perinuclear region</location>
    </subcellularLocation>
    <text evidence="1 10">Localized in the soma and growth cones of differentiated neurites and the Golgi and vesicles of the early secretory compartment of epithelial cells. KIF5A/B/C-mediated transportation to axon tips is essential for its function in enhancing neuronal axon elongation.</text>
</comment>
<comment type="PTM">
    <text evidence="2">Phosphorylation by ROCK1 is crucial for the recruitment of JNK.</text>
</comment>
<comment type="similarity">
    <text evidence="12">Belongs to the JIP scaffold family.</text>
</comment>
<name>JIP3_RAT</name>
<proteinExistence type="evidence at protein level"/>
<feature type="chain" id="PRO_0000444893" description="C-Jun-amino-terminal kinase-interacting protein 3">
    <location>
        <begin position="1"/>
        <end position="1322"/>
    </location>
</feature>
<feature type="domain" description="RH1" evidence="4">
    <location>
        <begin position="12"/>
        <end position="100"/>
    </location>
</feature>
<feature type="domain" description="RH2" evidence="5">
    <location>
        <begin position="506"/>
        <end position="580"/>
    </location>
</feature>
<feature type="region of interest" description="Kinesin-binding domain (KBD); essential for its function in axon elongation" evidence="1">
    <location>
        <begin position="50"/>
        <end position="80"/>
    </location>
</feature>
<feature type="region of interest" description="Disordered" evidence="6">
    <location>
        <begin position="183"/>
        <end position="211"/>
    </location>
</feature>
<feature type="region of interest" description="JNK-binding domain (JBD); essential for its function in axon elongation" evidence="1">
    <location>
        <begin position="210"/>
        <end position="226"/>
    </location>
</feature>
<feature type="region of interest" description="Disordered" evidence="6">
    <location>
        <begin position="245"/>
        <end position="317"/>
    </location>
</feature>
<feature type="region of interest" description="Leucine zipper-like domain (LZ); essential for its function in axon elongation" evidence="8">
    <location>
        <begin position="424"/>
        <end position="459"/>
    </location>
</feature>
<feature type="region of interest" description="Interaction with NTRK2" evidence="8">
    <location>
        <begin position="459"/>
        <end position="515"/>
    </location>
</feature>
<feature type="region of interest" description="Disordered" evidence="6">
    <location>
        <begin position="704"/>
        <end position="754"/>
    </location>
</feature>
<feature type="region of interest" description="Disordered" evidence="6">
    <location>
        <begin position="844"/>
        <end position="952"/>
    </location>
</feature>
<feature type="region of interest" description="Disordered" evidence="6">
    <location>
        <begin position="1281"/>
        <end position="1307"/>
    </location>
</feature>
<feature type="coiled-coil region" evidence="3">
    <location>
        <begin position="66"/>
        <end position="167"/>
    </location>
</feature>
<feature type="coiled-coil region" evidence="3">
    <location>
        <begin position="443"/>
        <end position="534"/>
    </location>
</feature>
<feature type="compositionally biased region" description="Low complexity" evidence="6">
    <location>
        <begin position="261"/>
        <end position="270"/>
    </location>
</feature>
<feature type="compositionally biased region" description="Polar residues" evidence="6">
    <location>
        <begin position="271"/>
        <end position="282"/>
    </location>
</feature>
<feature type="compositionally biased region" description="Basic residues" evidence="6">
    <location>
        <begin position="305"/>
        <end position="315"/>
    </location>
</feature>
<feature type="compositionally biased region" description="Basic and acidic residues" evidence="6">
    <location>
        <begin position="724"/>
        <end position="750"/>
    </location>
</feature>
<feature type="compositionally biased region" description="Polar residues" evidence="6">
    <location>
        <begin position="914"/>
        <end position="937"/>
    </location>
</feature>
<feature type="compositionally biased region" description="Low complexity" evidence="6">
    <location>
        <begin position="941"/>
        <end position="952"/>
    </location>
</feature>
<feature type="compositionally biased region" description="Acidic residues" evidence="6">
    <location>
        <begin position="1285"/>
        <end position="1294"/>
    </location>
</feature>
<feature type="modified residue" description="Phosphothreonine" evidence="1">
    <location>
        <position position="266"/>
    </location>
</feature>
<feature type="modified residue" description="Phosphothreonine" evidence="1">
    <location>
        <position position="276"/>
    </location>
</feature>
<feature type="modified residue" description="Phosphothreonine" evidence="1">
    <location>
        <position position="287"/>
    </location>
</feature>
<feature type="modified residue" description="Phosphoserine" evidence="2">
    <location>
        <position position="315"/>
    </location>
</feature>
<feature type="modified residue" description="Phosphoserine" evidence="2">
    <location>
        <position position="365"/>
    </location>
</feature>
<feature type="modified residue" description="Phosphoserine" evidence="1">
    <location>
        <position position="366"/>
    </location>
</feature>
<feature type="modified residue" description="Phosphoserine" evidence="1">
    <location>
        <position position="588"/>
    </location>
</feature>
<feature type="modified residue" description="Phosphoserine" evidence="1">
    <location>
        <position position="662"/>
    </location>
</feature>
<feature type="sequence conflict" description="In Ref. 1; ABD24061." evidence="12" ref="1">
    <original>I</original>
    <variation>V</variation>
    <location>
        <position position="440"/>
    </location>
</feature>
<feature type="sequence conflict" description="In Ref. 1; ABD24061." evidence="12" ref="1">
    <original>V</original>
    <variation>M</variation>
    <location>
        <position position="940"/>
    </location>
</feature>
<feature type="sequence conflict" description="In Ref. 1; ABD24061." evidence="12" ref="1">
    <original>Y</original>
    <variation>N</variation>
    <location>
        <position position="1208"/>
    </location>
</feature>
<keyword id="KW-0966">Cell projection</keyword>
<keyword id="KW-0175">Coiled coil</keyword>
<keyword id="KW-0963">Cytoplasm</keyword>
<keyword id="KW-0968">Cytoplasmic vesicle</keyword>
<keyword id="KW-0333">Golgi apparatus</keyword>
<keyword id="KW-0597">Phosphoprotein</keyword>
<keyword id="KW-1185">Reference proteome</keyword>
<organism>
    <name type="scientific">Rattus norvegicus</name>
    <name type="common">Rat</name>
    <dbReference type="NCBI Taxonomy" id="10116"/>
    <lineage>
        <taxon>Eukaryota</taxon>
        <taxon>Metazoa</taxon>
        <taxon>Chordata</taxon>
        <taxon>Craniata</taxon>
        <taxon>Vertebrata</taxon>
        <taxon>Euteleostomi</taxon>
        <taxon>Mammalia</taxon>
        <taxon>Eutheria</taxon>
        <taxon>Euarchontoglires</taxon>
        <taxon>Glires</taxon>
        <taxon>Rodentia</taxon>
        <taxon>Myomorpha</taxon>
        <taxon>Muroidea</taxon>
        <taxon>Muridae</taxon>
        <taxon>Murinae</taxon>
        <taxon>Rattus</taxon>
    </lineage>
</organism>